<evidence type="ECO:0000250" key="1">
    <source>
        <dbReference type="UniProtKB" id="A2RRY8"/>
    </source>
</evidence>
<evidence type="ECO:0000256" key="2">
    <source>
        <dbReference type="SAM" id="MobiDB-lite"/>
    </source>
</evidence>
<evidence type="ECO:0000269" key="3">
    <source>
    </source>
</evidence>
<evidence type="ECO:0007744" key="4">
    <source>
    </source>
</evidence>
<organism>
    <name type="scientific">Rattus norvegicus</name>
    <name type="common">Rat</name>
    <dbReference type="NCBI Taxonomy" id="10116"/>
    <lineage>
        <taxon>Eukaryota</taxon>
        <taxon>Metazoa</taxon>
        <taxon>Chordata</taxon>
        <taxon>Craniata</taxon>
        <taxon>Vertebrata</taxon>
        <taxon>Euteleostomi</taxon>
        <taxon>Mammalia</taxon>
        <taxon>Eutheria</taxon>
        <taxon>Euarchontoglires</taxon>
        <taxon>Glires</taxon>
        <taxon>Rodentia</taxon>
        <taxon>Myomorpha</taxon>
        <taxon>Muroidea</taxon>
        <taxon>Muridae</taxon>
        <taxon>Murinae</taxon>
        <taxon>Rattus</taxon>
    </lineage>
</organism>
<accession>Q811V6</accession>
<sequence>MEAARDAQHSDVLESKGCLASRTSSHQNRRASLSSDGTGLRVTDAPGLPRVMTPSDTASGLGQKTSSTSSSSSSSSSSSPSSSSSAQANRSLKVSLPEIQKEKYPEEFSLLKSQTTDGQRPEWTFYPRFSSNIHTYHVGKQCFFNGVFRGNRKSVAERTVDKSLGKKKYDIDPRNGIPKLTPGDNPYMFPEQSKEFFKAGATLPPVNFSLGPYEKKFDTFIPLEPLPQIPNLPFWEKEKANNLKNEIKEVEDLDNWQAPMPFLHGFLSTANRTITTCDQKV</sequence>
<dbReference type="EMBL" id="AY157978">
    <property type="protein sequence ID" value="AAN41641.1"/>
    <property type="molecule type" value="mRNA"/>
</dbReference>
<dbReference type="RefSeq" id="NP_852041.1">
    <property type="nucleotide sequence ID" value="NM_181376.2"/>
</dbReference>
<dbReference type="FunCoup" id="Q811V6">
    <property type="interactions" value="53"/>
</dbReference>
<dbReference type="STRING" id="10116.ENSRNOP00000074772"/>
<dbReference type="iPTMnet" id="Q811V6"/>
<dbReference type="PhosphoSitePlus" id="Q811V6"/>
<dbReference type="PaxDb" id="10116-ENSRNOP00000038995"/>
<dbReference type="GeneID" id="301255"/>
<dbReference type="KEGG" id="rno:301255"/>
<dbReference type="UCSC" id="RGD:631367">
    <property type="organism name" value="rat"/>
</dbReference>
<dbReference type="AGR" id="RGD:631367"/>
<dbReference type="CTD" id="221409"/>
<dbReference type="RGD" id="631367">
    <property type="gene designation" value="Spats1"/>
</dbReference>
<dbReference type="eggNOG" id="ENOG502S39M">
    <property type="taxonomic scope" value="Eukaryota"/>
</dbReference>
<dbReference type="InParanoid" id="Q811V6"/>
<dbReference type="PhylomeDB" id="Q811V6"/>
<dbReference type="PRO" id="PR:Q811V6"/>
<dbReference type="Proteomes" id="UP000002494">
    <property type="component" value="Unplaced"/>
</dbReference>
<dbReference type="InterPro" id="IPR029165">
    <property type="entry name" value="SASRP1"/>
</dbReference>
<dbReference type="PANTHER" id="PTHR35845">
    <property type="entry name" value="SPERMATOGENESIS-ASSOCIATED SERINE-RICH PROTEIN 1"/>
    <property type="match status" value="1"/>
</dbReference>
<dbReference type="PANTHER" id="PTHR35845:SF1">
    <property type="entry name" value="SPERMATOGENESIS-ASSOCIATED SERINE-RICH PROTEIN 1"/>
    <property type="match status" value="1"/>
</dbReference>
<dbReference type="Pfam" id="PF15160">
    <property type="entry name" value="SASRP1"/>
    <property type="match status" value="1"/>
</dbReference>
<feature type="chain" id="PRO_0000307696" description="Spermatogenesis-associated serine-rich protein 1">
    <location>
        <begin position="1"/>
        <end position="281"/>
    </location>
</feature>
<feature type="region of interest" description="Disordered" evidence="2">
    <location>
        <begin position="1"/>
        <end position="92"/>
    </location>
</feature>
<feature type="compositionally biased region" description="Basic and acidic residues" evidence="2">
    <location>
        <begin position="1"/>
        <end position="14"/>
    </location>
</feature>
<feature type="compositionally biased region" description="Polar residues" evidence="2">
    <location>
        <begin position="21"/>
        <end position="37"/>
    </location>
</feature>
<feature type="compositionally biased region" description="Polar residues" evidence="2">
    <location>
        <begin position="54"/>
        <end position="65"/>
    </location>
</feature>
<feature type="compositionally biased region" description="Low complexity" evidence="2">
    <location>
        <begin position="66"/>
        <end position="85"/>
    </location>
</feature>
<feature type="modified residue" description="Phosphothreonine" evidence="1">
    <location>
        <position position="53"/>
    </location>
</feature>
<feature type="modified residue" description="Phosphoserine" evidence="4">
    <location>
        <position position="71"/>
    </location>
</feature>
<feature type="modified residue" description="Phosphoserine" evidence="4">
    <location>
        <position position="74"/>
    </location>
</feature>
<feature type="modified residue" description="Phosphoserine" evidence="4">
    <location>
        <position position="77"/>
    </location>
</feature>
<feature type="modified residue" description="Phosphoserine" evidence="4">
    <location>
        <position position="78"/>
    </location>
</feature>
<feature type="modified residue" description="Phosphoserine" evidence="4">
    <location>
        <position position="79"/>
    </location>
</feature>
<feature type="modified residue" description="Phosphoserine" evidence="4">
    <location>
        <position position="91"/>
    </location>
</feature>
<reference key="1">
    <citation type="journal article" date="2002" name="Cytogenet. Genome Res.">
        <title>Identification and characterization of SRSP1, a rat gene differentially expressed during spermatogenesis and coding for a serine stretch-containing protein.</title>
        <authorList>
            <person name="Geisinger A."/>
            <person name="Dos Santos A."/>
            <person name="Benavente R."/>
            <person name="Wettstein R."/>
        </authorList>
    </citation>
    <scope>NUCLEOTIDE SEQUENCE [MRNA]</scope>
    <scope>TISSUE SPECIFICITY</scope>
    <source>
        <strain>Wistar</strain>
        <tissue>Spermatocyte</tissue>
    </source>
</reference>
<reference key="2">
    <citation type="journal article" date="2006" name="Proc. Natl. Acad. Sci. U.S.A.">
        <title>Quantitative phosphoproteomics of vasopressin-sensitive renal cells: regulation of aquaporin-2 phosphorylation at two sites.</title>
        <authorList>
            <person name="Hoffert J.D."/>
            <person name="Pisitkun T."/>
            <person name="Wang G."/>
            <person name="Shen R.-F."/>
            <person name="Knepper M.A."/>
        </authorList>
    </citation>
    <scope>PHOSPHORYLATION [LARGE SCALE ANALYSIS] AT SER-71; SER-74; SER-77; SER-78; SER-79 AND SER-91</scope>
    <scope>IDENTIFICATION BY MASS SPECTROMETRY [LARGE SCALE ANALYSIS]</scope>
</reference>
<keyword id="KW-0597">Phosphoprotein</keyword>
<keyword id="KW-1185">Reference proteome</keyword>
<comment type="tissue specificity">
    <text evidence="3">Detected in pachytene spermatocytes and round spermatids.</text>
</comment>
<name>SPAS1_RAT</name>
<gene>
    <name type="primary">Spats1</name>
    <name type="synonym">Srsp1</name>
</gene>
<protein>
    <recommendedName>
        <fullName>Spermatogenesis-associated serine-rich protein 1</fullName>
    </recommendedName>
    <alternativeName>
        <fullName>Spermatogenic serine-rich protein 1</fullName>
    </alternativeName>
</protein>
<proteinExistence type="evidence at protein level"/>